<proteinExistence type="inferred from homology"/>
<dbReference type="EC" id="2.3.1.275" evidence="1"/>
<dbReference type="EMBL" id="AE014292">
    <property type="protein sequence ID" value="AAN33790.1"/>
    <property type="molecule type" value="Genomic_DNA"/>
</dbReference>
<dbReference type="EMBL" id="CP002998">
    <property type="protein sequence ID" value="AEM20067.1"/>
    <property type="molecule type" value="Genomic_DNA"/>
</dbReference>
<dbReference type="RefSeq" id="WP_004690218.1">
    <property type="nucleotide sequence ID" value="NZ_KN046805.1"/>
</dbReference>
<dbReference type="SMR" id="P59246"/>
<dbReference type="GeneID" id="55592272"/>
<dbReference type="KEGG" id="bms:BRA0601"/>
<dbReference type="KEGG" id="bsi:BS1330_II0596"/>
<dbReference type="PATRIC" id="fig|204722.21.peg.537"/>
<dbReference type="HOGENOM" id="CLU_081254_1_0_5"/>
<dbReference type="PhylomeDB" id="P59246"/>
<dbReference type="UniPathway" id="UPA00085"/>
<dbReference type="Proteomes" id="UP000007104">
    <property type="component" value="Chromosome II"/>
</dbReference>
<dbReference type="GO" id="GO:0005886">
    <property type="term" value="C:plasma membrane"/>
    <property type="evidence" value="ECO:0007669"/>
    <property type="project" value="UniProtKB-SubCell"/>
</dbReference>
<dbReference type="GO" id="GO:0043772">
    <property type="term" value="F:acyl-phosphate glycerol-3-phosphate acyltransferase activity"/>
    <property type="evidence" value="ECO:0007669"/>
    <property type="project" value="UniProtKB-UniRule"/>
</dbReference>
<dbReference type="GO" id="GO:0008654">
    <property type="term" value="P:phospholipid biosynthetic process"/>
    <property type="evidence" value="ECO:0007669"/>
    <property type="project" value="UniProtKB-UniRule"/>
</dbReference>
<dbReference type="HAMAP" id="MF_01043">
    <property type="entry name" value="PlsY"/>
    <property type="match status" value="1"/>
</dbReference>
<dbReference type="InterPro" id="IPR003811">
    <property type="entry name" value="G3P_acylTferase_PlsY"/>
</dbReference>
<dbReference type="NCBIfam" id="TIGR00023">
    <property type="entry name" value="glycerol-3-phosphate 1-O-acyltransferase PlsY"/>
    <property type="match status" value="1"/>
</dbReference>
<dbReference type="PANTHER" id="PTHR30309:SF0">
    <property type="entry name" value="GLYCEROL-3-PHOSPHATE ACYLTRANSFERASE-RELATED"/>
    <property type="match status" value="1"/>
</dbReference>
<dbReference type="PANTHER" id="PTHR30309">
    <property type="entry name" value="INNER MEMBRANE PROTEIN YGIH"/>
    <property type="match status" value="1"/>
</dbReference>
<dbReference type="Pfam" id="PF02660">
    <property type="entry name" value="G3P_acyltransf"/>
    <property type="match status" value="1"/>
</dbReference>
<dbReference type="SMART" id="SM01207">
    <property type="entry name" value="G3P_acyltransf"/>
    <property type="match status" value="1"/>
</dbReference>
<gene>
    <name evidence="1" type="primary">plsY</name>
    <name type="ordered locus">BRA0601</name>
    <name type="ordered locus">BS1330_II0596</name>
</gene>
<comment type="function">
    <text evidence="1">Catalyzes the transfer of an acyl group from acyl-phosphate (acyl-PO(4)) to glycerol-3-phosphate (G3P) to form lysophosphatidic acid (LPA). This enzyme utilizes acyl-phosphate as fatty acyl donor, but not acyl-CoA or acyl-ACP.</text>
</comment>
<comment type="catalytic activity">
    <reaction evidence="1">
        <text>an acyl phosphate + sn-glycerol 3-phosphate = a 1-acyl-sn-glycero-3-phosphate + phosphate</text>
        <dbReference type="Rhea" id="RHEA:34075"/>
        <dbReference type="ChEBI" id="CHEBI:43474"/>
        <dbReference type="ChEBI" id="CHEBI:57597"/>
        <dbReference type="ChEBI" id="CHEBI:57970"/>
        <dbReference type="ChEBI" id="CHEBI:59918"/>
        <dbReference type="EC" id="2.3.1.275"/>
    </reaction>
</comment>
<comment type="pathway">
    <text evidence="1">Lipid metabolism; phospholipid metabolism.</text>
</comment>
<comment type="subunit">
    <text evidence="1">Probably interacts with PlsX.</text>
</comment>
<comment type="subcellular location">
    <subcellularLocation>
        <location evidence="1">Cell inner membrane</location>
        <topology evidence="1">Multi-pass membrane protein</topology>
    </subcellularLocation>
</comment>
<comment type="similarity">
    <text evidence="1">Belongs to the PlsY family.</text>
</comment>
<protein>
    <recommendedName>
        <fullName evidence="1">Glycerol-3-phosphate acyltransferase</fullName>
    </recommendedName>
    <alternativeName>
        <fullName evidence="1">Acyl-PO4 G3P acyltransferase</fullName>
    </alternativeName>
    <alternativeName>
        <fullName evidence="1">Acyl-phosphate--glycerol-3-phosphate acyltransferase</fullName>
    </alternativeName>
    <alternativeName>
        <fullName evidence="1">G3P acyltransferase</fullName>
        <shortName evidence="1">GPAT</shortName>
        <ecNumber evidence="1">2.3.1.275</ecNumber>
    </alternativeName>
    <alternativeName>
        <fullName evidence="1">Lysophosphatidic acid synthase</fullName>
        <shortName evidence="1">LPA synthase</shortName>
    </alternativeName>
</protein>
<reference key="1">
    <citation type="journal article" date="2002" name="Proc. Natl. Acad. Sci. U.S.A.">
        <title>The Brucella suis genome reveals fundamental similarities between animal and plant pathogens and symbionts.</title>
        <authorList>
            <person name="Paulsen I.T."/>
            <person name="Seshadri R."/>
            <person name="Nelson K.E."/>
            <person name="Eisen J.A."/>
            <person name="Heidelberg J.F."/>
            <person name="Read T.D."/>
            <person name="Dodson R.J."/>
            <person name="Umayam L.A."/>
            <person name="Brinkac L.M."/>
            <person name="Beanan M.J."/>
            <person name="Daugherty S.C."/>
            <person name="DeBoy R.T."/>
            <person name="Durkin A.S."/>
            <person name="Kolonay J.F."/>
            <person name="Madupu R."/>
            <person name="Nelson W.C."/>
            <person name="Ayodeji B."/>
            <person name="Kraul M."/>
            <person name="Shetty J."/>
            <person name="Malek J.A."/>
            <person name="Van Aken S.E."/>
            <person name="Riedmuller S."/>
            <person name="Tettelin H."/>
            <person name="Gill S.R."/>
            <person name="White O."/>
            <person name="Salzberg S.L."/>
            <person name="Hoover D.L."/>
            <person name="Lindler L.E."/>
            <person name="Halling S.M."/>
            <person name="Boyle S.M."/>
            <person name="Fraser C.M."/>
        </authorList>
    </citation>
    <scope>NUCLEOTIDE SEQUENCE [LARGE SCALE GENOMIC DNA]</scope>
    <source>
        <strain>1330</strain>
    </source>
</reference>
<reference key="2">
    <citation type="journal article" date="2011" name="J. Bacteriol.">
        <title>Revised genome sequence of Brucella suis 1330.</title>
        <authorList>
            <person name="Tae H."/>
            <person name="Shallom S."/>
            <person name="Settlage R."/>
            <person name="Preston D."/>
            <person name="Adams L.G."/>
            <person name="Garner H.R."/>
        </authorList>
    </citation>
    <scope>NUCLEOTIDE SEQUENCE [LARGE SCALE GENOMIC DNA]</scope>
    <source>
        <strain>1330</strain>
    </source>
</reference>
<accession>P59246</accession>
<accession>G0KCX9</accession>
<keyword id="KW-0997">Cell inner membrane</keyword>
<keyword id="KW-1003">Cell membrane</keyword>
<keyword id="KW-0444">Lipid biosynthesis</keyword>
<keyword id="KW-0443">Lipid metabolism</keyword>
<keyword id="KW-0472">Membrane</keyword>
<keyword id="KW-0594">Phospholipid biosynthesis</keyword>
<keyword id="KW-1208">Phospholipid metabolism</keyword>
<keyword id="KW-0808">Transferase</keyword>
<keyword id="KW-0812">Transmembrane</keyword>
<keyword id="KW-1133">Transmembrane helix</keyword>
<name>PLSY_BRUSU</name>
<evidence type="ECO:0000255" key="1">
    <source>
        <dbReference type="HAMAP-Rule" id="MF_01043"/>
    </source>
</evidence>
<organism>
    <name type="scientific">Brucella suis biovar 1 (strain 1330)</name>
    <dbReference type="NCBI Taxonomy" id="204722"/>
    <lineage>
        <taxon>Bacteria</taxon>
        <taxon>Pseudomonadati</taxon>
        <taxon>Pseudomonadota</taxon>
        <taxon>Alphaproteobacteria</taxon>
        <taxon>Hyphomicrobiales</taxon>
        <taxon>Brucellaceae</taxon>
        <taxon>Brucella/Ochrobactrum group</taxon>
        <taxon>Brucella</taxon>
    </lineage>
</organism>
<feature type="chain" id="PRO_0000188338" description="Glycerol-3-phosphate acyltransferase">
    <location>
        <begin position="1"/>
        <end position="201"/>
    </location>
</feature>
<feature type="transmembrane region" description="Helical" evidence="1">
    <location>
        <begin position="10"/>
        <end position="30"/>
    </location>
</feature>
<feature type="transmembrane region" description="Helical" evidence="1">
    <location>
        <begin position="60"/>
        <end position="80"/>
    </location>
</feature>
<feature type="transmembrane region" description="Helical" evidence="1">
    <location>
        <begin position="86"/>
        <end position="106"/>
    </location>
</feature>
<feature type="transmembrane region" description="Helical" evidence="1">
    <location>
        <begin position="116"/>
        <end position="136"/>
    </location>
</feature>
<feature type="transmembrane region" description="Helical" evidence="1">
    <location>
        <begin position="166"/>
        <end position="186"/>
    </location>
</feature>
<sequence>MAEPGFFNAMLIGALIFGYVLGSIPFGLILTRLAGLGDVRAIGSGNIGATNVLRTGNKKLAAATLILDALKGTAAALIAAHFGQNAAIAAGFGAFIGHLFPVWIGFKGGKGVATYLGVLIGLAWAGALVFAAAWIVTALLTRYSSLSALVASLVVPIALYSRGNQALAALFAIMTVIVFIKHRANIRRLLNGTESKIGAKG</sequence>